<sequence>MNFIRQGLGIALQPELTLKSIAGELCSVPLEPTFYRQISLLAKEKPVEGSPLFLLQMCMEQLVAIGKI</sequence>
<protein>
    <recommendedName>
        <fullName>Putative protein YfaH</fullName>
    </recommendedName>
</protein>
<accession>P45505</accession>
<proteinExistence type="uncertain"/>
<gene>
    <name type="primary">yfaH</name>
    <name type="ordered locus">b2238</name>
    <name type="ordered locus">JW2232</name>
</gene>
<comment type="caution">
    <text evidence="1">Could be the product of a pseudogene, it is missing up to 230 N-terminal residues compared to orthologs.</text>
</comment>
<reference key="1">
    <citation type="journal article" date="1984" name="Proc. Natl. Acad. Sci. U.S.A.">
        <title>Primary structure of the Escherichia coli ribonucleoside diphosphate reductase operon.</title>
        <authorList>
            <person name="Carlson J."/>
            <person name="Fuchs J.A."/>
            <person name="Messing J."/>
        </authorList>
    </citation>
    <scope>NUCLEOTIDE SEQUENCE [GENOMIC DNA]</scope>
</reference>
<reference key="2">
    <citation type="journal article" date="1997" name="DNA Res.">
        <title>Construction of a contiguous 874-kb sequence of the Escherichia coli-K12 genome corresponding to 50.0-68.8 min on the linkage map and analysis of its sequence features.</title>
        <authorList>
            <person name="Yamamoto Y."/>
            <person name="Aiba H."/>
            <person name="Baba T."/>
            <person name="Hayashi K."/>
            <person name="Inada T."/>
            <person name="Isono K."/>
            <person name="Itoh T."/>
            <person name="Kimura S."/>
            <person name="Kitagawa M."/>
            <person name="Makino K."/>
            <person name="Miki T."/>
            <person name="Mitsuhashi N."/>
            <person name="Mizobuchi K."/>
            <person name="Mori H."/>
            <person name="Nakade S."/>
            <person name="Nakamura Y."/>
            <person name="Nashimoto H."/>
            <person name="Oshima T."/>
            <person name="Oyama S."/>
            <person name="Saito N."/>
            <person name="Sampei G."/>
            <person name="Satoh Y."/>
            <person name="Sivasundaram S."/>
            <person name="Tagami H."/>
            <person name="Takahashi H."/>
            <person name="Takeda J."/>
            <person name="Takemoto K."/>
            <person name="Uehara K."/>
            <person name="Wada C."/>
            <person name="Yamagata S."/>
            <person name="Horiuchi T."/>
        </authorList>
    </citation>
    <scope>NUCLEOTIDE SEQUENCE [LARGE SCALE GENOMIC DNA]</scope>
    <source>
        <strain>K12 / W3110 / ATCC 27325 / DSM 5911</strain>
    </source>
</reference>
<reference key="3">
    <citation type="journal article" date="1997" name="Science">
        <title>The complete genome sequence of Escherichia coli K-12.</title>
        <authorList>
            <person name="Blattner F.R."/>
            <person name="Plunkett G. III"/>
            <person name="Bloch C.A."/>
            <person name="Perna N.T."/>
            <person name="Burland V."/>
            <person name="Riley M."/>
            <person name="Collado-Vides J."/>
            <person name="Glasner J.D."/>
            <person name="Rode C.K."/>
            <person name="Mayhew G.F."/>
            <person name="Gregor J."/>
            <person name="Davis N.W."/>
            <person name="Kirkpatrick H.A."/>
            <person name="Goeden M.A."/>
            <person name="Rose D.J."/>
            <person name="Mau B."/>
            <person name="Shao Y."/>
        </authorList>
    </citation>
    <scope>NUCLEOTIDE SEQUENCE [LARGE SCALE GENOMIC DNA]</scope>
    <source>
        <strain>K12 / MG1655 / ATCC 47076</strain>
    </source>
</reference>
<reference key="4">
    <citation type="journal article" date="2006" name="Mol. Syst. Biol.">
        <title>Highly accurate genome sequences of Escherichia coli K-12 strains MG1655 and W3110.</title>
        <authorList>
            <person name="Hayashi K."/>
            <person name="Morooka N."/>
            <person name="Yamamoto Y."/>
            <person name="Fujita K."/>
            <person name="Isono K."/>
            <person name="Choi S."/>
            <person name="Ohtsubo E."/>
            <person name="Baba T."/>
            <person name="Wanner B.L."/>
            <person name="Mori H."/>
            <person name="Horiuchi T."/>
        </authorList>
    </citation>
    <scope>NUCLEOTIDE SEQUENCE [LARGE SCALE GENOMIC DNA]</scope>
    <source>
        <strain>K12 / W3110 / ATCC 27325 / DSM 5911</strain>
    </source>
</reference>
<reference key="5">
    <citation type="journal article" date="1995" name="Nucleic Acids Res.">
        <title>Detection of new genes in a bacterial genome using Markov models for three gene classes.</title>
        <authorList>
            <person name="Borodovsky M."/>
            <person name="McIninch J."/>
            <person name="Koonin E.V."/>
            <person name="Rudd K.E."/>
            <person name="Medigue C."/>
            <person name="Danchin A."/>
        </authorList>
    </citation>
    <scope>IDENTIFICATION</scope>
</reference>
<evidence type="ECO:0000305" key="1"/>
<keyword id="KW-1185">Reference proteome</keyword>
<feature type="chain" id="PRO_0000169173" description="Putative protein YfaH">
    <location>
        <begin position="1"/>
        <end position="68"/>
    </location>
</feature>
<organism>
    <name type="scientific">Escherichia coli (strain K12)</name>
    <dbReference type="NCBI Taxonomy" id="83333"/>
    <lineage>
        <taxon>Bacteria</taxon>
        <taxon>Pseudomonadati</taxon>
        <taxon>Pseudomonadota</taxon>
        <taxon>Gammaproteobacteria</taxon>
        <taxon>Enterobacterales</taxon>
        <taxon>Enterobacteriaceae</taxon>
        <taxon>Escherichia</taxon>
    </lineage>
</organism>
<dbReference type="EMBL" id="K02672">
    <property type="status" value="NOT_ANNOTATED_CDS"/>
    <property type="molecule type" value="Genomic_DNA"/>
</dbReference>
<dbReference type="EMBL" id="U00096">
    <property type="status" value="NOT_ANNOTATED_CDS"/>
    <property type="molecule type" value="Genomic_DNA"/>
</dbReference>
<dbReference type="EMBL" id="AP009048">
    <property type="protein sequence ID" value="BAA16057.1"/>
    <property type="molecule type" value="Genomic_DNA"/>
</dbReference>
<dbReference type="PIR" id="D64994">
    <property type="entry name" value="D64994"/>
</dbReference>
<dbReference type="BioGRID" id="4260495">
    <property type="interactions" value="6"/>
</dbReference>
<dbReference type="FunCoup" id="P45505">
    <property type="interactions" value="43"/>
</dbReference>
<dbReference type="KEGG" id="ecj:JW2232"/>
<dbReference type="KEGG" id="ecoc:C3026_12505"/>
<dbReference type="PATRIC" id="fig|83333.103.peg.3116"/>
<dbReference type="EchoBASE" id="EB2719"/>
<dbReference type="eggNOG" id="COG0583">
    <property type="taxonomic scope" value="Bacteria"/>
</dbReference>
<dbReference type="HOGENOM" id="CLU_2584493_0_0_6"/>
<dbReference type="InParanoid" id="P45505"/>
<dbReference type="Proteomes" id="UP000000625">
    <property type="component" value="Chromosome"/>
</dbReference>
<dbReference type="NCBIfam" id="NF007272">
    <property type="entry name" value="PRK09729.1"/>
    <property type="match status" value="1"/>
</dbReference>
<name>YFAH_ECOLI</name>